<keyword id="KW-0186">Copper</keyword>
<keyword id="KW-0378">Hydrolase</keyword>
<keyword id="KW-0479">Metal-binding</keyword>
<keyword id="KW-0560">Oxidoreductase</keyword>
<keyword id="KW-1185">Reference proteome</keyword>
<keyword id="KW-0808">Transferase</keyword>
<keyword id="KW-0862">Zinc</keyword>
<accession>O31726</accession>
<proteinExistence type="inferred from homology"/>
<name>PURNU_BACSU</name>
<gene>
    <name type="primary">ylmD</name>
    <name type="ordered locus">BSU15370</name>
</gene>
<organism>
    <name type="scientific">Bacillus subtilis (strain 168)</name>
    <dbReference type="NCBI Taxonomy" id="224308"/>
    <lineage>
        <taxon>Bacteria</taxon>
        <taxon>Bacillati</taxon>
        <taxon>Bacillota</taxon>
        <taxon>Bacilli</taxon>
        <taxon>Bacillales</taxon>
        <taxon>Bacillaceae</taxon>
        <taxon>Bacillus</taxon>
    </lineage>
</organism>
<comment type="function">
    <text evidence="2">Purine nucleoside enzyme that catalyzes the phosphorolysis of adenosine and inosine nucleosides, yielding D-ribose 1-phosphate and the respective free bases, adenine and hypoxanthine. Also catalyzes the phosphorolysis of S-methyl-5'-thioadenosine into adenine and S-methyl-5-thio-alpha-D-ribose 1-phosphate. Also has adenosine deaminase activity.</text>
</comment>
<comment type="catalytic activity">
    <reaction evidence="2">
        <text>adenosine + phosphate = alpha-D-ribose 1-phosphate + adenine</text>
        <dbReference type="Rhea" id="RHEA:27642"/>
        <dbReference type="ChEBI" id="CHEBI:16335"/>
        <dbReference type="ChEBI" id="CHEBI:16708"/>
        <dbReference type="ChEBI" id="CHEBI:43474"/>
        <dbReference type="ChEBI" id="CHEBI:57720"/>
        <dbReference type="EC" id="2.4.2.1"/>
    </reaction>
    <physiologicalReaction direction="left-to-right" evidence="2">
        <dbReference type="Rhea" id="RHEA:27643"/>
    </physiologicalReaction>
</comment>
<comment type="catalytic activity">
    <reaction evidence="2">
        <text>S-methyl-5'-thioadenosine + phosphate = 5-(methylsulfanyl)-alpha-D-ribose 1-phosphate + adenine</text>
        <dbReference type="Rhea" id="RHEA:11852"/>
        <dbReference type="ChEBI" id="CHEBI:16708"/>
        <dbReference type="ChEBI" id="CHEBI:17509"/>
        <dbReference type="ChEBI" id="CHEBI:43474"/>
        <dbReference type="ChEBI" id="CHEBI:58533"/>
        <dbReference type="EC" id="2.4.2.28"/>
    </reaction>
    <physiologicalReaction direction="left-to-right" evidence="2">
        <dbReference type="Rhea" id="RHEA:11853"/>
    </physiologicalReaction>
</comment>
<comment type="catalytic activity">
    <reaction evidence="2">
        <text>inosine + phosphate = alpha-D-ribose 1-phosphate + hypoxanthine</text>
        <dbReference type="Rhea" id="RHEA:27646"/>
        <dbReference type="ChEBI" id="CHEBI:17368"/>
        <dbReference type="ChEBI" id="CHEBI:17596"/>
        <dbReference type="ChEBI" id="CHEBI:43474"/>
        <dbReference type="ChEBI" id="CHEBI:57720"/>
        <dbReference type="EC" id="2.4.2.1"/>
    </reaction>
    <physiologicalReaction direction="left-to-right" evidence="2">
        <dbReference type="Rhea" id="RHEA:27647"/>
    </physiologicalReaction>
</comment>
<comment type="catalytic activity">
    <reaction evidence="2">
        <text>adenosine + H2O + H(+) = inosine + NH4(+)</text>
        <dbReference type="Rhea" id="RHEA:24408"/>
        <dbReference type="ChEBI" id="CHEBI:15377"/>
        <dbReference type="ChEBI" id="CHEBI:15378"/>
        <dbReference type="ChEBI" id="CHEBI:16335"/>
        <dbReference type="ChEBI" id="CHEBI:17596"/>
        <dbReference type="ChEBI" id="CHEBI:28938"/>
        <dbReference type="EC" id="3.5.4.4"/>
    </reaction>
    <physiologicalReaction direction="left-to-right" evidence="2">
        <dbReference type="Rhea" id="RHEA:24409"/>
    </physiologicalReaction>
</comment>
<comment type="cofactor">
    <cofactor evidence="1">
        <name>Cu(2+)</name>
        <dbReference type="ChEBI" id="CHEBI:29036"/>
    </cofactor>
    <cofactor evidence="2">
        <name>Zn(2+)</name>
        <dbReference type="ChEBI" id="CHEBI:29105"/>
    </cofactor>
</comment>
<comment type="subunit">
    <text evidence="3">Homodimer.</text>
</comment>
<comment type="similarity">
    <text evidence="4">Belongs to the purine nucleoside phosphorylase YfiH/LACC1 family.</text>
</comment>
<feature type="chain" id="PRO_0000163157" description="Purine nucleoside phosphorylase YlmD">
    <location>
        <begin position="1"/>
        <end position="278"/>
    </location>
</feature>
<feature type="binding site" evidence="2">
    <location>
        <position position="87"/>
    </location>
    <ligand>
        <name>Zn(2+)</name>
        <dbReference type="ChEBI" id="CHEBI:29105"/>
        <note>catalytic</note>
    </ligand>
</feature>
<feature type="binding site" evidence="2">
    <location>
        <position position="132"/>
    </location>
    <ligand>
        <name>Zn(2+)</name>
        <dbReference type="ChEBI" id="CHEBI:29105"/>
        <note>catalytic</note>
    </ligand>
</feature>
<feature type="binding site" evidence="2">
    <location>
        <position position="149"/>
    </location>
    <ligand>
        <name>Zn(2+)</name>
        <dbReference type="ChEBI" id="CHEBI:29105"/>
        <note>catalytic</note>
    </ligand>
</feature>
<sequence length="278" mass="30944">MNTYHPFSLTTPSTLMIQDWAQTNQNNKEVIAGFTTKNGGVSQKPFESLNTGLHVHDKDADVVKNREYIADMFNTDLQSWVFADQTHDNRVQKVTQRDRGKGAREYHTALKATDGIYTNEKNVFLALCFADCVPLFFYDPVKSLVGVAHAGWKGTVKQIGREMVKQWTEKEGSNPSDIYAVIGPSISGACYTVDDRVMDAVRALPVSADLAANQTAKAQYQLDLKELNRLILMDSGLASEQISVSGLCTESEPSLFYSHRRDQGKTGRMMSFIGMKEA</sequence>
<reference key="1">
    <citation type="journal article" date="1997" name="Nature">
        <title>The complete genome sequence of the Gram-positive bacterium Bacillus subtilis.</title>
        <authorList>
            <person name="Kunst F."/>
            <person name="Ogasawara N."/>
            <person name="Moszer I."/>
            <person name="Albertini A.M."/>
            <person name="Alloni G."/>
            <person name="Azevedo V."/>
            <person name="Bertero M.G."/>
            <person name="Bessieres P."/>
            <person name="Bolotin A."/>
            <person name="Borchert S."/>
            <person name="Borriss R."/>
            <person name="Boursier L."/>
            <person name="Brans A."/>
            <person name="Braun M."/>
            <person name="Brignell S.C."/>
            <person name="Bron S."/>
            <person name="Brouillet S."/>
            <person name="Bruschi C.V."/>
            <person name="Caldwell B."/>
            <person name="Capuano V."/>
            <person name="Carter N.M."/>
            <person name="Choi S.-K."/>
            <person name="Codani J.-J."/>
            <person name="Connerton I.F."/>
            <person name="Cummings N.J."/>
            <person name="Daniel R.A."/>
            <person name="Denizot F."/>
            <person name="Devine K.M."/>
            <person name="Duesterhoeft A."/>
            <person name="Ehrlich S.D."/>
            <person name="Emmerson P.T."/>
            <person name="Entian K.-D."/>
            <person name="Errington J."/>
            <person name="Fabret C."/>
            <person name="Ferrari E."/>
            <person name="Foulger D."/>
            <person name="Fritz C."/>
            <person name="Fujita M."/>
            <person name="Fujita Y."/>
            <person name="Fuma S."/>
            <person name="Galizzi A."/>
            <person name="Galleron N."/>
            <person name="Ghim S.-Y."/>
            <person name="Glaser P."/>
            <person name="Goffeau A."/>
            <person name="Golightly E.J."/>
            <person name="Grandi G."/>
            <person name="Guiseppi G."/>
            <person name="Guy B.J."/>
            <person name="Haga K."/>
            <person name="Haiech J."/>
            <person name="Harwood C.R."/>
            <person name="Henaut A."/>
            <person name="Hilbert H."/>
            <person name="Holsappel S."/>
            <person name="Hosono S."/>
            <person name="Hullo M.-F."/>
            <person name="Itaya M."/>
            <person name="Jones L.-M."/>
            <person name="Joris B."/>
            <person name="Karamata D."/>
            <person name="Kasahara Y."/>
            <person name="Klaerr-Blanchard M."/>
            <person name="Klein C."/>
            <person name="Kobayashi Y."/>
            <person name="Koetter P."/>
            <person name="Koningstein G."/>
            <person name="Krogh S."/>
            <person name="Kumano M."/>
            <person name="Kurita K."/>
            <person name="Lapidus A."/>
            <person name="Lardinois S."/>
            <person name="Lauber J."/>
            <person name="Lazarevic V."/>
            <person name="Lee S.-M."/>
            <person name="Levine A."/>
            <person name="Liu H."/>
            <person name="Masuda S."/>
            <person name="Mauel C."/>
            <person name="Medigue C."/>
            <person name="Medina N."/>
            <person name="Mellado R.P."/>
            <person name="Mizuno M."/>
            <person name="Moestl D."/>
            <person name="Nakai S."/>
            <person name="Noback M."/>
            <person name="Noone D."/>
            <person name="O'Reilly M."/>
            <person name="Ogawa K."/>
            <person name="Ogiwara A."/>
            <person name="Oudega B."/>
            <person name="Park S.-H."/>
            <person name="Parro V."/>
            <person name="Pohl T.M."/>
            <person name="Portetelle D."/>
            <person name="Porwollik S."/>
            <person name="Prescott A.M."/>
            <person name="Presecan E."/>
            <person name="Pujic P."/>
            <person name="Purnelle B."/>
            <person name="Rapoport G."/>
            <person name="Rey M."/>
            <person name="Reynolds S."/>
            <person name="Rieger M."/>
            <person name="Rivolta C."/>
            <person name="Rocha E."/>
            <person name="Roche B."/>
            <person name="Rose M."/>
            <person name="Sadaie Y."/>
            <person name="Sato T."/>
            <person name="Scanlan E."/>
            <person name="Schleich S."/>
            <person name="Schroeter R."/>
            <person name="Scoffone F."/>
            <person name="Sekiguchi J."/>
            <person name="Sekowska A."/>
            <person name="Seror S.J."/>
            <person name="Serror P."/>
            <person name="Shin B.-S."/>
            <person name="Soldo B."/>
            <person name="Sorokin A."/>
            <person name="Tacconi E."/>
            <person name="Takagi T."/>
            <person name="Takahashi H."/>
            <person name="Takemaru K."/>
            <person name="Takeuchi M."/>
            <person name="Tamakoshi A."/>
            <person name="Tanaka T."/>
            <person name="Terpstra P."/>
            <person name="Tognoni A."/>
            <person name="Tosato V."/>
            <person name="Uchiyama S."/>
            <person name="Vandenbol M."/>
            <person name="Vannier F."/>
            <person name="Vassarotti A."/>
            <person name="Viari A."/>
            <person name="Wambutt R."/>
            <person name="Wedler E."/>
            <person name="Wedler H."/>
            <person name="Weitzenegger T."/>
            <person name="Winters P."/>
            <person name="Wipat A."/>
            <person name="Yamamoto H."/>
            <person name="Yamane K."/>
            <person name="Yasumoto K."/>
            <person name="Yata K."/>
            <person name="Yoshida K."/>
            <person name="Yoshikawa H.-F."/>
            <person name="Zumstein E."/>
            <person name="Yoshikawa H."/>
            <person name="Danchin A."/>
        </authorList>
    </citation>
    <scope>NUCLEOTIDE SEQUENCE [LARGE SCALE GENOMIC DNA]</scope>
    <source>
        <strain>168</strain>
    </source>
</reference>
<dbReference type="EC" id="2.4.2.1" evidence="2"/>
<dbReference type="EC" id="3.5.4.4" evidence="2"/>
<dbReference type="EC" id="2.4.2.28" evidence="2"/>
<dbReference type="EMBL" id="AL009126">
    <property type="protein sequence ID" value="CAB13411.1"/>
    <property type="molecule type" value="Genomic_DNA"/>
</dbReference>
<dbReference type="PIR" id="D69876">
    <property type="entry name" value="D69876"/>
</dbReference>
<dbReference type="RefSeq" id="NP_389420.1">
    <property type="nucleotide sequence ID" value="NC_000964.3"/>
</dbReference>
<dbReference type="SMR" id="O31726"/>
<dbReference type="FunCoup" id="O31726">
    <property type="interactions" value="284"/>
</dbReference>
<dbReference type="STRING" id="224308.BSU15370"/>
<dbReference type="PaxDb" id="224308-BSU15370"/>
<dbReference type="EnsemblBacteria" id="CAB13411">
    <property type="protein sequence ID" value="CAB13411"/>
    <property type="gene ID" value="BSU_15370"/>
</dbReference>
<dbReference type="GeneID" id="939954"/>
<dbReference type="KEGG" id="bsu:BSU15370"/>
<dbReference type="PATRIC" id="fig|224308.179.peg.1675"/>
<dbReference type="eggNOG" id="COG1496">
    <property type="taxonomic scope" value="Bacteria"/>
</dbReference>
<dbReference type="InParanoid" id="O31726"/>
<dbReference type="OrthoDB" id="4279at2"/>
<dbReference type="PhylomeDB" id="O31726"/>
<dbReference type="BioCyc" id="BSUB:BSU15370-MONOMER"/>
<dbReference type="Proteomes" id="UP000001570">
    <property type="component" value="Chromosome"/>
</dbReference>
<dbReference type="GO" id="GO:0004000">
    <property type="term" value="F:adenosine deaminase activity"/>
    <property type="evidence" value="ECO:0007669"/>
    <property type="project" value="RHEA"/>
</dbReference>
<dbReference type="GO" id="GO:0005507">
    <property type="term" value="F:copper ion binding"/>
    <property type="evidence" value="ECO:0000318"/>
    <property type="project" value="GO_Central"/>
</dbReference>
<dbReference type="GO" id="GO:0016491">
    <property type="term" value="F:oxidoreductase activity"/>
    <property type="evidence" value="ECO:0007669"/>
    <property type="project" value="UniProtKB-KW"/>
</dbReference>
<dbReference type="GO" id="GO:0017061">
    <property type="term" value="F:S-methyl-5-thioadenosine phosphorylase activity"/>
    <property type="evidence" value="ECO:0007669"/>
    <property type="project" value="UniProtKB-EC"/>
</dbReference>
<dbReference type="CDD" id="cd16833">
    <property type="entry name" value="YfiH"/>
    <property type="match status" value="1"/>
</dbReference>
<dbReference type="Gene3D" id="3.60.140.10">
    <property type="entry name" value="CNF1/YfiH-like putative cysteine hydrolases"/>
    <property type="match status" value="1"/>
</dbReference>
<dbReference type="InterPro" id="IPR003730">
    <property type="entry name" value="Cu_polyphenol_OxRdtase"/>
</dbReference>
<dbReference type="InterPro" id="IPR038371">
    <property type="entry name" value="Cu_polyphenol_OxRdtase_sf"/>
</dbReference>
<dbReference type="InterPro" id="IPR011324">
    <property type="entry name" value="Cytotoxic_necrot_fac-like_cat"/>
</dbReference>
<dbReference type="NCBIfam" id="TIGR00726">
    <property type="entry name" value="peptidoglycan editing factor PgeF"/>
    <property type="match status" value="1"/>
</dbReference>
<dbReference type="PANTHER" id="PTHR30616:SF2">
    <property type="entry name" value="PURINE NUCLEOSIDE PHOSPHORYLASE LACC1"/>
    <property type="match status" value="1"/>
</dbReference>
<dbReference type="PANTHER" id="PTHR30616">
    <property type="entry name" value="UNCHARACTERIZED PROTEIN YFIH"/>
    <property type="match status" value="1"/>
</dbReference>
<dbReference type="Pfam" id="PF02578">
    <property type="entry name" value="Cu-oxidase_4"/>
    <property type="match status" value="1"/>
</dbReference>
<dbReference type="SUPFAM" id="SSF64438">
    <property type="entry name" value="CNF1/YfiH-like putative cysteine hydrolases"/>
    <property type="match status" value="1"/>
</dbReference>
<protein>
    <recommendedName>
        <fullName>Purine nucleoside phosphorylase YlmD</fullName>
        <ecNumber evidence="2">2.4.2.1</ecNumber>
    </recommendedName>
    <alternativeName>
        <fullName>Adenosine deaminase YlmD</fullName>
        <ecNumber evidence="2">3.5.4.4</ecNumber>
    </alternativeName>
    <alternativeName>
        <fullName>S-methyl-5'-thioadenosine phosphorylase YlmD</fullName>
        <ecNumber evidence="2">2.4.2.28</ecNumber>
    </alternativeName>
</protein>
<evidence type="ECO:0000250" key="1">
    <source>
        <dbReference type="UniProtKB" id="P33644"/>
    </source>
</evidence>
<evidence type="ECO:0000250" key="2">
    <source>
        <dbReference type="UniProtKB" id="P84138"/>
    </source>
</evidence>
<evidence type="ECO:0000250" key="3">
    <source>
        <dbReference type="UniProtKB" id="Q1EIR0"/>
    </source>
</evidence>
<evidence type="ECO:0000305" key="4"/>